<evidence type="ECO:0000255" key="1">
    <source>
        <dbReference type="HAMAP-Rule" id="MF_00340"/>
    </source>
</evidence>
<evidence type="ECO:0000256" key="2">
    <source>
        <dbReference type="SAM" id="MobiDB-lite"/>
    </source>
</evidence>
<evidence type="ECO:0000305" key="3"/>
<proteinExistence type="inferred from homology"/>
<reference key="1">
    <citation type="submission" date="2006-12" db="EMBL/GenBank/DDBJ databases">
        <authorList>
            <person name="Fouts D.E."/>
            <person name="Nelson K.E."/>
            <person name="Sebastian Y."/>
        </authorList>
    </citation>
    <scope>NUCLEOTIDE SEQUENCE [LARGE SCALE GENOMIC DNA]</scope>
    <source>
        <strain>81-176</strain>
    </source>
</reference>
<accession>A1VY49</accession>
<gene>
    <name evidence="1" type="primary">rpmF</name>
    <name type="ordered locus">CJJ81176_0352</name>
</gene>
<sequence length="48" mass="5628">MAVPKRRVSKTRAAKRRTHYKVSLPMPIKDKDGSYKMPHRANPTTKEY</sequence>
<feature type="chain" id="PRO_0000296442" description="Large ribosomal subunit protein bL32">
    <location>
        <begin position="1"/>
        <end position="48"/>
    </location>
</feature>
<feature type="region of interest" description="Disordered" evidence="2">
    <location>
        <begin position="1"/>
        <end position="48"/>
    </location>
</feature>
<feature type="compositionally biased region" description="Basic residues" evidence="2">
    <location>
        <begin position="1"/>
        <end position="20"/>
    </location>
</feature>
<keyword id="KW-0687">Ribonucleoprotein</keyword>
<keyword id="KW-0689">Ribosomal protein</keyword>
<protein>
    <recommendedName>
        <fullName evidence="1">Large ribosomal subunit protein bL32</fullName>
    </recommendedName>
    <alternativeName>
        <fullName evidence="3">50S ribosomal protein L32</fullName>
    </alternativeName>
</protein>
<dbReference type="EMBL" id="CP000538">
    <property type="protein sequence ID" value="EAQ73477.1"/>
    <property type="molecule type" value="Genomic_DNA"/>
</dbReference>
<dbReference type="RefSeq" id="WP_002858674.1">
    <property type="nucleotide sequence ID" value="NC_008787.1"/>
</dbReference>
<dbReference type="SMR" id="A1VY49"/>
<dbReference type="KEGG" id="cjj:CJJ81176_0352"/>
<dbReference type="eggNOG" id="COG0333">
    <property type="taxonomic scope" value="Bacteria"/>
</dbReference>
<dbReference type="HOGENOM" id="CLU_129084_1_2_7"/>
<dbReference type="Proteomes" id="UP000000646">
    <property type="component" value="Chromosome"/>
</dbReference>
<dbReference type="GO" id="GO:0015934">
    <property type="term" value="C:large ribosomal subunit"/>
    <property type="evidence" value="ECO:0007669"/>
    <property type="project" value="InterPro"/>
</dbReference>
<dbReference type="GO" id="GO:0003735">
    <property type="term" value="F:structural constituent of ribosome"/>
    <property type="evidence" value="ECO:0007669"/>
    <property type="project" value="InterPro"/>
</dbReference>
<dbReference type="GO" id="GO:0006412">
    <property type="term" value="P:translation"/>
    <property type="evidence" value="ECO:0007669"/>
    <property type="project" value="UniProtKB-UniRule"/>
</dbReference>
<dbReference type="HAMAP" id="MF_00340">
    <property type="entry name" value="Ribosomal_bL32"/>
    <property type="match status" value="1"/>
</dbReference>
<dbReference type="InterPro" id="IPR002677">
    <property type="entry name" value="Ribosomal_bL32"/>
</dbReference>
<dbReference type="InterPro" id="IPR011332">
    <property type="entry name" value="Ribosomal_zn-bd"/>
</dbReference>
<dbReference type="NCBIfam" id="TIGR01031">
    <property type="entry name" value="rpmF_bact"/>
    <property type="match status" value="1"/>
</dbReference>
<dbReference type="Pfam" id="PF01783">
    <property type="entry name" value="Ribosomal_L32p"/>
    <property type="match status" value="1"/>
</dbReference>
<dbReference type="SUPFAM" id="SSF57829">
    <property type="entry name" value="Zn-binding ribosomal proteins"/>
    <property type="match status" value="1"/>
</dbReference>
<name>RL32_CAMJJ</name>
<organism>
    <name type="scientific">Campylobacter jejuni subsp. jejuni serotype O:23/36 (strain 81-176)</name>
    <dbReference type="NCBI Taxonomy" id="354242"/>
    <lineage>
        <taxon>Bacteria</taxon>
        <taxon>Pseudomonadati</taxon>
        <taxon>Campylobacterota</taxon>
        <taxon>Epsilonproteobacteria</taxon>
        <taxon>Campylobacterales</taxon>
        <taxon>Campylobacteraceae</taxon>
        <taxon>Campylobacter</taxon>
    </lineage>
</organism>
<comment type="similarity">
    <text evidence="1">Belongs to the bacterial ribosomal protein bL32 family.</text>
</comment>